<reference key="1">
    <citation type="journal article" date="2006" name="Domest. Anim. Endocrinol.">
        <title>Bovine hepatocyte growth factor and its receptor c-Met: cDNA cloning and expression analysis in the mammary gland.</title>
        <authorList>
            <person name="Yamaji D."/>
            <person name="Kimura K."/>
            <person name="Watanabe A."/>
            <person name="Kon Y."/>
            <person name="Iwanaga T."/>
            <person name="Soliman M.M."/>
            <person name="Ahmed M.M."/>
            <person name="Saito M."/>
        </authorList>
    </citation>
    <scope>NUCLEOTIDE SEQUENCE [MRNA]</scope>
</reference>
<proteinExistence type="evidence at transcript level"/>
<gene>
    <name type="primary">HGF</name>
</gene>
<organism>
    <name type="scientific">Bos taurus</name>
    <name type="common">Bovine</name>
    <dbReference type="NCBI Taxonomy" id="9913"/>
    <lineage>
        <taxon>Eukaryota</taxon>
        <taxon>Metazoa</taxon>
        <taxon>Chordata</taxon>
        <taxon>Craniata</taxon>
        <taxon>Vertebrata</taxon>
        <taxon>Euteleostomi</taxon>
        <taxon>Mammalia</taxon>
        <taxon>Eutheria</taxon>
        <taxon>Laurasiatheria</taxon>
        <taxon>Artiodactyla</taxon>
        <taxon>Ruminantia</taxon>
        <taxon>Pecora</taxon>
        <taxon>Bovidae</taxon>
        <taxon>Bovinae</taxon>
        <taxon>Bos</taxon>
    </lineage>
</organism>
<dbReference type="EMBL" id="AB110822">
    <property type="protein sequence ID" value="BAD02475.1"/>
    <property type="molecule type" value="mRNA"/>
</dbReference>
<dbReference type="RefSeq" id="NP_001026921.1">
    <property type="nucleotide sequence ID" value="NM_001031751.2"/>
</dbReference>
<dbReference type="SMR" id="Q76BS1"/>
<dbReference type="FunCoup" id="Q76BS1">
    <property type="interactions" value="523"/>
</dbReference>
<dbReference type="STRING" id="9913.ENSBTAP00000023490"/>
<dbReference type="MEROPS" id="S01.976"/>
<dbReference type="GlyCosmos" id="Q76BS1">
    <property type="glycosylation" value="3 sites, No reported glycans"/>
</dbReference>
<dbReference type="GlyGen" id="Q76BS1">
    <property type="glycosylation" value="3 sites"/>
</dbReference>
<dbReference type="PaxDb" id="9913-ENSBTAP00000023490"/>
<dbReference type="GeneID" id="282879"/>
<dbReference type="KEGG" id="bta:282879"/>
<dbReference type="CTD" id="3082"/>
<dbReference type="eggNOG" id="ENOG502QR40">
    <property type="taxonomic scope" value="Eukaryota"/>
</dbReference>
<dbReference type="InParanoid" id="Q76BS1"/>
<dbReference type="OrthoDB" id="41905at2759"/>
<dbReference type="Proteomes" id="UP000009136">
    <property type="component" value="Unplaced"/>
</dbReference>
<dbReference type="GO" id="GO:0005615">
    <property type="term" value="C:extracellular space"/>
    <property type="evidence" value="ECO:0000318"/>
    <property type="project" value="GO_Central"/>
</dbReference>
<dbReference type="GO" id="GO:0008083">
    <property type="term" value="F:growth factor activity"/>
    <property type="evidence" value="ECO:0007669"/>
    <property type="project" value="UniProtKB-KW"/>
</dbReference>
<dbReference type="GO" id="GO:0005102">
    <property type="term" value="F:signaling receptor binding"/>
    <property type="evidence" value="ECO:0000318"/>
    <property type="project" value="GO_Central"/>
</dbReference>
<dbReference type="GO" id="GO:0048012">
    <property type="term" value="P:hepatocyte growth factor receptor signaling pathway"/>
    <property type="evidence" value="ECO:0000318"/>
    <property type="project" value="GO_Central"/>
</dbReference>
<dbReference type="GO" id="GO:0043066">
    <property type="term" value="P:negative regulation of apoptotic process"/>
    <property type="evidence" value="ECO:0000318"/>
    <property type="project" value="GO_Central"/>
</dbReference>
<dbReference type="GO" id="GO:0006508">
    <property type="term" value="P:proteolysis"/>
    <property type="evidence" value="ECO:0007669"/>
    <property type="project" value="InterPro"/>
</dbReference>
<dbReference type="CDD" id="cd00108">
    <property type="entry name" value="KR"/>
    <property type="match status" value="4"/>
</dbReference>
<dbReference type="CDD" id="cd00129">
    <property type="entry name" value="PAN_APPLE"/>
    <property type="match status" value="1"/>
</dbReference>
<dbReference type="CDD" id="cd00190">
    <property type="entry name" value="Tryp_SPc"/>
    <property type="match status" value="1"/>
</dbReference>
<dbReference type="FunFam" id="2.40.10.10:FF:000023">
    <property type="entry name" value="Hepatocyte growth factor"/>
    <property type="match status" value="1"/>
</dbReference>
<dbReference type="FunFam" id="2.40.10.10:FF:000026">
    <property type="entry name" value="Hepatocyte growth factor"/>
    <property type="match status" value="1"/>
</dbReference>
<dbReference type="FunFam" id="2.40.20.10:FF:000004">
    <property type="entry name" value="Hepatocyte growth factor"/>
    <property type="match status" value="1"/>
</dbReference>
<dbReference type="FunFam" id="2.40.20.10:FF:000007">
    <property type="entry name" value="Hepatocyte growth factor"/>
    <property type="match status" value="1"/>
</dbReference>
<dbReference type="FunFam" id="2.40.20.10:FF:000008">
    <property type="entry name" value="Hepatocyte growth factor"/>
    <property type="match status" value="1"/>
</dbReference>
<dbReference type="FunFam" id="2.40.20.10:FF:000047">
    <property type="entry name" value="Hepatocyte growth factor"/>
    <property type="match status" value="1"/>
</dbReference>
<dbReference type="FunFam" id="3.50.4.10:FF:000003">
    <property type="entry name" value="Hepatocyte growth factor"/>
    <property type="match status" value="1"/>
</dbReference>
<dbReference type="Gene3D" id="3.50.4.10">
    <property type="entry name" value="Hepatocyte Growth Factor"/>
    <property type="match status" value="1"/>
</dbReference>
<dbReference type="Gene3D" id="2.40.20.10">
    <property type="entry name" value="Plasminogen Kringle 4"/>
    <property type="match status" value="4"/>
</dbReference>
<dbReference type="Gene3D" id="2.40.10.10">
    <property type="entry name" value="Trypsin-like serine proteases"/>
    <property type="match status" value="2"/>
</dbReference>
<dbReference type="InterPro" id="IPR027284">
    <property type="entry name" value="Hepatocyte_GF"/>
</dbReference>
<dbReference type="InterPro" id="IPR024174">
    <property type="entry name" value="HGF/MST1"/>
</dbReference>
<dbReference type="InterPro" id="IPR000001">
    <property type="entry name" value="Kringle"/>
</dbReference>
<dbReference type="InterPro" id="IPR013806">
    <property type="entry name" value="Kringle-like"/>
</dbReference>
<dbReference type="InterPro" id="IPR018056">
    <property type="entry name" value="Kringle_CS"/>
</dbReference>
<dbReference type="InterPro" id="IPR038178">
    <property type="entry name" value="Kringle_sf"/>
</dbReference>
<dbReference type="InterPro" id="IPR003609">
    <property type="entry name" value="Pan_app"/>
</dbReference>
<dbReference type="InterPro" id="IPR009003">
    <property type="entry name" value="Peptidase_S1_PA"/>
</dbReference>
<dbReference type="InterPro" id="IPR043504">
    <property type="entry name" value="Peptidase_S1_PA_chymotrypsin"/>
</dbReference>
<dbReference type="InterPro" id="IPR001314">
    <property type="entry name" value="Peptidase_S1A"/>
</dbReference>
<dbReference type="InterPro" id="IPR050759">
    <property type="entry name" value="Serine_protease_kringle"/>
</dbReference>
<dbReference type="InterPro" id="IPR001254">
    <property type="entry name" value="Trypsin_dom"/>
</dbReference>
<dbReference type="PANTHER" id="PTHR24261:SF8">
    <property type="entry name" value="HEPATOCYTE GROWTH FACTOR"/>
    <property type="match status" value="1"/>
</dbReference>
<dbReference type="PANTHER" id="PTHR24261">
    <property type="entry name" value="PLASMINOGEN-RELATED"/>
    <property type="match status" value="1"/>
</dbReference>
<dbReference type="Pfam" id="PF00051">
    <property type="entry name" value="Kringle"/>
    <property type="match status" value="4"/>
</dbReference>
<dbReference type="Pfam" id="PF00024">
    <property type="entry name" value="PAN_1"/>
    <property type="match status" value="1"/>
</dbReference>
<dbReference type="Pfam" id="PF00089">
    <property type="entry name" value="Trypsin"/>
    <property type="match status" value="1"/>
</dbReference>
<dbReference type="PIRSF" id="PIRSF500183">
    <property type="entry name" value="Hepatocyte_GF"/>
    <property type="match status" value="1"/>
</dbReference>
<dbReference type="PIRSF" id="PIRSF001152">
    <property type="entry name" value="HGF_MST1"/>
    <property type="match status" value="1"/>
</dbReference>
<dbReference type="PRINTS" id="PR00722">
    <property type="entry name" value="CHYMOTRYPSIN"/>
</dbReference>
<dbReference type="PRINTS" id="PR00018">
    <property type="entry name" value="KRINGLE"/>
</dbReference>
<dbReference type="SMART" id="SM00130">
    <property type="entry name" value="KR"/>
    <property type="match status" value="4"/>
</dbReference>
<dbReference type="SMART" id="SM00473">
    <property type="entry name" value="PAN_AP"/>
    <property type="match status" value="1"/>
</dbReference>
<dbReference type="SMART" id="SM00020">
    <property type="entry name" value="Tryp_SPc"/>
    <property type="match status" value="1"/>
</dbReference>
<dbReference type="SUPFAM" id="SSF57414">
    <property type="entry name" value="Hairpin loop containing domain-like"/>
    <property type="match status" value="1"/>
</dbReference>
<dbReference type="SUPFAM" id="SSF57440">
    <property type="entry name" value="Kringle-like"/>
    <property type="match status" value="4"/>
</dbReference>
<dbReference type="SUPFAM" id="SSF50494">
    <property type="entry name" value="Trypsin-like serine proteases"/>
    <property type="match status" value="1"/>
</dbReference>
<dbReference type="PROSITE" id="PS00021">
    <property type="entry name" value="KRINGLE_1"/>
    <property type="match status" value="4"/>
</dbReference>
<dbReference type="PROSITE" id="PS50070">
    <property type="entry name" value="KRINGLE_2"/>
    <property type="match status" value="4"/>
</dbReference>
<dbReference type="PROSITE" id="PS50948">
    <property type="entry name" value="PAN"/>
    <property type="match status" value="1"/>
</dbReference>
<dbReference type="PROSITE" id="PS50240">
    <property type="entry name" value="TRYPSIN_DOM"/>
    <property type="match status" value="1"/>
</dbReference>
<keyword id="KW-1015">Disulfide bond</keyword>
<keyword id="KW-0325">Glycoprotein</keyword>
<keyword id="KW-0339">Growth factor</keyword>
<keyword id="KW-0420">Kringle</keyword>
<keyword id="KW-0873">Pyrrolidone carboxylic acid</keyword>
<keyword id="KW-1185">Reference proteome</keyword>
<keyword id="KW-0677">Repeat</keyword>
<keyword id="KW-0721">Serine protease homolog</keyword>
<keyword id="KW-0732">Signal</keyword>
<name>HGF_BOVIN</name>
<accession>Q76BS1</accession>
<feature type="signal peptide" evidence="1">
    <location>
        <begin position="1"/>
        <end position="31"/>
    </location>
</feature>
<feature type="chain" id="PRO_0000274197" description="Hepatocyte growth factor alpha chain">
    <location>
        <begin position="32"/>
        <end position="494"/>
    </location>
</feature>
<feature type="chain" id="PRO_0000274198" description="Hepatocyte growth factor beta chain">
    <location>
        <begin position="495"/>
        <end position="730"/>
    </location>
</feature>
<feature type="domain" description="PAN" evidence="6">
    <location>
        <begin position="37"/>
        <end position="123"/>
    </location>
</feature>
<feature type="domain" description="Kringle 1" evidence="4">
    <location>
        <begin position="128"/>
        <end position="206"/>
    </location>
</feature>
<feature type="domain" description="Kringle 2" evidence="4">
    <location>
        <begin position="211"/>
        <end position="288"/>
    </location>
</feature>
<feature type="domain" description="Kringle 3" evidence="4">
    <location>
        <begin position="305"/>
        <end position="383"/>
    </location>
</feature>
<feature type="domain" description="Kringle 4" evidence="4">
    <location>
        <begin position="391"/>
        <end position="469"/>
    </location>
</feature>
<feature type="domain" description="Peptidase S1" evidence="5">
    <location>
        <begin position="495"/>
        <end position="723"/>
    </location>
</feature>
<feature type="modified residue" description="Pyrrolidone carboxylic acid" evidence="2">
    <location>
        <position position="32"/>
    </location>
</feature>
<feature type="glycosylation site" description="N-linked (GlcNAc...) asparagine" evidence="3">
    <location>
        <position position="294"/>
    </location>
</feature>
<feature type="glycosylation site" description="N-linked (GlcNAc...) asparagine" evidence="3">
    <location>
        <position position="568"/>
    </location>
</feature>
<feature type="glycosylation site" description="N-linked (GlcNAc...) asparagine" evidence="3">
    <location>
        <position position="655"/>
    </location>
</feature>
<feature type="disulfide bond" evidence="1">
    <location>
        <begin position="70"/>
        <end position="96"/>
    </location>
</feature>
<feature type="disulfide bond" evidence="1">
    <location>
        <begin position="74"/>
        <end position="84"/>
    </location>
</feature>
<feature type="disulfide bond" evidence="1">
    <location>
        <begin position="128"/>
        <end position="206"/>
    </location>
</feature>
<feature type="disulfide bond" evidence="1">
    <location>
        <begin position="149"/>
        <end position="189"/>
    </location>
</feature>
<feature type="disulfide bond" evidence="1">
    <location>
        <begin position="177"/>
        <end position="201"/>
    </location>
</feature>
<feature type="disulfide bond" evidence="1">
    <location>
        <begin position="211"/>
        <end position="288"/>
    </location>
</feature>
<feature type="disulfide bond" evidence="1">
    <location>
        <begin position="232"/>
        <end position="271"/>
    </location>
</feature>
<feature type="disulfide bond" evidence="1">
    <location>
        <begin position="260"/>
        <end position="283"/>
    </location>
</feature>
<feature type="disulfide bond" evidence="1">
    <location>
        <begin position="305"/>
        <end position="383"/>
    </location>
</feature>
<feature type="disulfide bond" evidence="1">
    <location>
        <begin position="326"/>
        <end position="365"/>
    </location>
</feature>
<feature type="disulfide bond" evidence="1">
    <location>
        <begin position="354"/>
        <end position="377"/>
    </location>
</feature>
<feature type="disulfide bond" evidence="1">
    <location>
        <begin position="391"/>
        <end position="469"/>
    </location>
</feature>
<feature type="disulfide bond" evidence="1">
    <location>
        <begin position="412"/>
        <end position="452"/>
    </location>
</feature>
<feature type="disulfide bond" evidence="1">
    <location>
        <begin position="440"/>
        <end position="464"/>
    </location>
</feature>
<feature type="disulfide bond" description="Interchain (between alpha and beta chains)" evidence="4 5 6">
    <location>
        <begin position="487"/>
        <end position="606"/>
    </location>
</feature>
<feature type="disulfide bond" evidence="1">
    <location>
        <begin position="519"/>
        <end position="535"/>
    </location>
</feature>
<feature type="disulfide bond" evidence="1">
    <location>
        <begin position="614"/>
        <end position="681"/>
    </location>
</feature>
<feature type="disulfide bond" evidence="1">
    <location>
        <begin position="644"/>
        <end position="660"/>
    </location>
</feature>
<feature type="disulfide bond" evidence="1">
    <location>
        <begin position="671"/>
        <end position="699"/>
    </location>
</feature>
<sequence length="730" mass="83357">MWVTRLLPVLLLQHVLLHLLLLPIAIPYAEGQKKRRNTLHEFKRSAKTTLIKEDPLLKIKTKKMNTADQCANRCIRNKGLPFTCKAFVFDKARKRCLWFPFNSMSSGVKKEFGHEFDLYENKDYIRNCIIGKGGSYKGTVSITKSGIKCQPWNSMIPHEHSFLPSSYRGKDLQENYCRNPRGEEGGPWCFTSNPEVRYEVCDIPQCSEVECMTCNGESYRGPMDHTETGKICQRWDHQTPHRHKFLPERYPDKGFDDNYCRNPDGKPRPWCYTLDPDTPWEYCAIKMCAHSTMNDTDLPMQTTECIQGQGEGYRGTINTIWNGIPCQRWDSQYPHQHDITPENFKCKDLRENYCRNPDGAESPWCFTTDPNIRVGYCSQIPKCDVSSGQDCYRGNGKNYMGSLSKTRSGLTCSMWDKNMEDLHRHIFWEPDATKLNKNYCRNPDDDAHGPWCYTGNPLIPWDYCPISRCEGDTTPTIVNLDHPVISCAKTKQLRVVNGIPTRTNVGWMVSLKYRNKHICGGSLIKESWILTARQCFPSRNKDLKDYEAWLGIHDVHGRGDEKRKQVLNVTQLVYGPEGSDLVLLKLARPAILDDFVSTIDLPNYGCTIPEKTTCSVYGWGYTGLINSDGLLRVAHLYIMGNEKCSQYHQGKVTLNESEICAGAENIVSGPCEGDYGGPLVCEQHKMRMVLGVIVPGRGCAIPNRPGIFVRVAYYAKWIHKIILTYKAPQL</sequence>
<protein>
    <recommendedName>
        <fullName>Hepatocyte growth factor</fullName>
    </recommendedName>
    <alternativeName>
        <fullName>Hepatopoietin-A</fullName>
    </alternativeName>
    <alternativeName>
        <fullName>Scatter factor</fullName>
        <shortName>SF</shortName>
    </alternativeName>
    <component>
        <recommendedName>
            <fullName>Hepatocyte growth factor alpha chain</fullName>
        </recommendedName>
    </component>
    <component>
        <recommendedName>
            <fullName>Hepatocyte growth factor beta chain</fullName>
        </recommendedName>
    </component>
</protein>
<comment type="function">
    <text evidence="2">Potent mitogen for mature parenchymal hepatocyte cells, seems to be a hepatotrophic factor, and acts as a growth factor for a broad spectrum of tissues and cell types (By similarity). Activating ligand for the receptor tyrosine kinase MET by binding to it and promoting its dimerization (By similarity). Activates MAPK signaling following TMPRSS13 cleavage and activation (By similarity).</text>
</comment>
<comment type="subunit">
    <text evidence="1">Dimer of an alpha chain and a beta chain linked by a disulfide bond. Interacts with SRPX2; the interaction increases HGF mitogenic activity (By similarity).</text>
</comment>
<comment type="PTM">
    <text evidence="2">The single-chain precursor undergoes proteolytic processing by TMPRSS13 resulting in an active two-chain form. The single-chain precursor undergoes proteolytic processing by HGFAC resulting in an active two-chain form.</text>
</comment>
<comment type="similarity">
    <text evidence="5">Belongs to the peptidase S1 family. Plasminogen subfamily.</text>
</comment>
<comment type="caution">
    <text evidence="7">Has lost two of the three essential catalytic residues and so probably has no enzymatic activity.</text>
</comment>
<evidence type="ECO:0000250" key="1"/>
<evidence type="ECO:0000250" key="2">
    <source>
        <dbReference type="UniProtKB" id="P14210"/>
    </source>
</evidence>
<evidence type="ECO:0000255" key="3"/>
<evidence type="ECO:0000255" key="4">
    <source>
        <dbReference type="PROSITE-ProRule" id="PRU00121"/>
    </source>
</evidence>
<evidence type="ECO:0000255" key="5">
    <source>
        <dbReference type="PROSITE-ProRule" id="PRU00274"/>
    </source>
</evidence>
<evidence type="ECO:0000255" key="6">
    <source>
        <dbReference type="PROSITE-ProRule" id="PRU00315"/>
    </source>
</evidence>
<evidence type="ECO:0000305" key="7"/>